<reference key="1">
    <citation type="journal article" date="1993" name="Mol. Cell. Biol.">
        <title>Two homologous zinc finger genes identified by multicopy suppression in a SNF1 protein kinase mutant of Saccharomyces cerevisiae.</title>
        <authorList>
            <person name="Estruch F."/>
            <person name="Carlson M."/>
        </authorList>
    </citation>
    <scope>NUCLEOTIDE SEQUENCE [GENOMIC DNA]</scope>
    <source>
        <strain>ATCC 204508 / S288c</strain>
    </source>
</reference>
<reference key="2">
    <citation type="journal article" date="1997" name="Nature">
        <title>The nucleotide sequence of Saccharomyces cerevisiae chromosome XIII.</title>
        <authorList>
            <person name="Bowman S."/>
            <person name="Churcher C.M."/>
            <person name="Badcock K."/>
            <person name="Brown D."/>
            <person name="Chillingworth T."/>
            <person name="Connor R."/>
            <person name="Dedman K."/>
            <person name="Devlin K."/>
            <person name="Gentles S."/>
            <person name="Hamlin N."/>
            <person name="Hunt S."/>
            <person name="Jagels K."/>
            <person name="Lye G."/>
            <person name="Moule S."/>
            <person name="Odell C."/>
            <person name="Pearson D."/>
            <person name="Rajandream M.A."/>
            <person name="Rice P."/>
            <person name="Skelton J."/>
            <person name="Walsh S.V."/>
            <person name="Whitehead S."/>
            <person name="Barrell B.G."/>
        </authorList>
    </citation>
    <scope>NUCLEOTIDE SEQUENCE [LARGE SCALE GENOMIC DNA]</scope>
    <source>
        <strain>ATCC 204508 / S288c</strain>
    </source>
</reference>
<reference key="3">
    <citation type="journal article" date="2014" name="G3 (Bethesda)">
        <title>The reference genome sequence of Saccharomyces cerevisiae: Then and now.</title>
        <authorList>
            <person name="Engel S.R."/>
            <person name="Dietrich F.S."/>
            <person name="Fisk D.G."/>
            <person name="Binkley G."/>
            <person name="Balakrishnan R."/>
            <person name="Costanzo M.C."/>
            <person name="Dwight S.S."/>
            <person name="Hitz B.C."/>
            <person name="Karra K."/>
            <person name="Nash R.S."/>
            <person name="Weng S."/>
            <person name="Wong E.D."/>
            <person name="Lloyd P."/>
            <person name="Skrzypek M.S."/>
            <person name="Miyasato S.R."/>
            <person name="Simison M."/>
            <person name="Cherry J.M."/>
        </authorList>
    </citation>
    <scope>GENOME REANNOTATION</scope>
    <source>
        <strain>ATCC 204508 / S288c</strain>
    </source>
</reference>
<reference key="4">
    <citation type="journal article" date="1996" name="EMBO J.">
        <title>The Saccharomyces cerevisiae zinc finger proteins Msn2p and Msn4p are required for transcriptional induction through the stress response element (STRE).</title>
        <authorList>
            <person name="Martinez-Pastor M.T."/>
            <person name="Marchler G."/>
            <person name="Schueller C."/>
            <person name="Marchler-Bauer A."/>
            <person name="Ruis H."/>
            <person name="Estruch F."/>
        </authorList>
    </citation>
    <scope>CHARACTERIZATION</scope>
</reference>
<reference key="5">
    <citation type="journal article" date="2002" name="Genes Cells">
        <title>Yeast Whi2 and Psr1-phosphatase form a complex and regulate STRE-mediated gene expression.</title>
        <authorList>
            <person name="Kaida D."/>
            <person name="Yashiroda H."/>
            <person name="Toh-e A."/>
            <person name="Kikuchi Y."/>
        </authorList>
    </citation>
    <scope>INTERACTION WITH WHI2</scope>
    <scope>PHOSPHORYLATION</scope>
</reference>
<reference key="6">
    <citation type="journal article" date="2003" name="J. Cell Biol.">
        <title>Oscillatory nucleocytoplasmic shuttling of the general stress response transcriptional activators Msn2 and Msn4 in Saccharomyces cerevisiae.</title>
        <authorList>
            <person name="Jacquet M."/>
            <person name="Renault G."/>
            <person name="Lallet S."/>
            <person name="De Mey J."/>
            <person name="Goldbeter A."/>
        </authorList>
    </citation>
    <scope>NUCLEOCYTOPLASMIC SHUTTLING</scope>
</reference>
<reference key="7">
    <citation type="journal article" date="2003" name="Nature">
        <title>Global analysis of protein expression in yeast.</title>
        <authorList>
            <person name="Ghaemmaghami S."/>
            <person name="Huh W.-K."/>
            <person name="Bower K."/>
            <person name="Howson R.W."/>
            <person name="Belle A."/>
            <person name="Dephoure N."/>
            <person name="O'Shea E.K."/>
            <person name="Weissman J.S."/>
        </authorList>
    </citation>
    <scope>LEVEL OF PROTEIN EXPRESSION [LARGE SCALE ANALYSIS]</scope>
</reference>
<reference key="8">
    <citation type="journal article" date="2007" name="J. Proteome Res.">
        <title>Large-scale phosphorylation analysis of alpha-factor-arrested Saccharomyces cerevisiae.</title>
        <authorList>
            <person name="Li X."/>
            <person name="Gerber S.A."/>
            <person name="Rudner A.D."/>
            <person name="Beausoleil S.A."/>
            <person name="Haas W."/>
            <person name="Villen J."/>
            <person name="Elias J.E."/>
            <person name="Gygi S.P."/>
        </authorList>
    </citation>
    <scope>PHOSPHORYLATION [LARGE SCALE ANALYSIS] AT SER-304 AND SER-633</scope>
    <scope>IDENTIFICATION BY MASS SPECTROMETRY [LARGE SCALE ANALYSIS]</scope>
    <source>
        <strain>ADR376</strain>
    </source>
</reference>
<reference key="9">
    <citation type="journal article" date="2007" name="Proc. Natl. Acad. Sci. U.S.A.">
        <title>Analysis of phosphorylation sites on proteins from Saccharomyces cerevisiae by electron transfer dissociation (ETD) mass spectrometry.</title>
        <authorList>
            <person name="Chi A."/>
            <person name="Huttenhower C."/>
            <person name="Geer L.Y."/>
            <person name="Coon J.J."/>
            <person name="Syka J.E.P."/>
            <person name="Bai D.L."/>
            <person name="Shabanowitz J."/>
            <person name="Burke D.J."/>
            <person name="Troyanskaya O.G."/>
            <person name="Hunt D.F."/>
        </authorList>
    </citation>
    <scope>IDENTIFICATION BY MASS SPECTROMETRY [LARGE SCALE ANALYSIS]</scope>
</reference>
<reference key="10">
    <citation type="journal article" date="2008" name="Mol. Cell. Proteomics">
        <title>A multidimensional chromatography technology for in-depth phosphoproteome analysis.</title>
        <authorList>
            <person name="Albuquerque C.P."/>
            <person name="Smolka M.B."/>
            <person name="Payne S.H."/>
            <person name="Bafna V."/>
            <person name="Eng J."/>
            <person name="Zhou H."/>
        </authorList>
    </citation>
    <scope>PHOSPHORYLATION [LARGE SCALE ANALYSIS] AT SER-288 AND SER-451</scope>
    <scope>IDENTIFICATION BY MASS SPECTROMETRY [LARGE SCALE ANALYSIS]</scope>
</reference>
<reference key="11">
    <citation type="journal article" date="2009" name="Science">
        <title>Global analysis of Cdk1 substrate phosphorylation sites provides insights into evolution.</title>
        <authorList>
            <person name="Holt L.J."/>
            <person name="Tuch B.B."/>
            <person name="Villen J."/>
            <person name="Johnson A.D."/>
            <person name="Gygi S.P."/>
            <person name="Morgan D.O."/>
        </authorList>
    </citation>
    <scope>PHOSPHORYLATION [LARGE SCALE ANALYSIS] AT SER-288; SER-304; SER-451; SER-582 AND SER-633</scope>
    <scope>IDENTIFICATION BY MASS SPECTROMETRY [LARGE SCALE ANALYSIS]</scope>
</reference>
<reference key="12">
    <citation type="journal article" date="2016" name="PLoS ONE">
        <title>The 9aaTAD transactivation domains: From Gal4 to p53.</title>
        <authorList>
            <person name="Piskacek M."/>
            <person name="Havelka M."/>
            <person name="Rezacova M."/>
            <person name="Knight A."/>
        </authorList>
    </citation>
    <scope>DOMAIN</scope>
</reference>
<organism>
    <name type="scientific">Saccharomyces cerevisiae (strain ATCC 204508 / S288c)</name>
    <name type="common">Baker's yeast</name>
    <dbReference type="NCBI Taxonomy" id="559292"/>
    <lineage>
        <taxon>Eukaryota</taxon>
        <taxon>Fungi</taxon>
        <taxon>Dikarya</taxon>
        <taxon>Ascomycota</taxon>
        <taxon>Saccharomycotina</taxon>
        <taxon>Saccharomycetes</taxon>
        <taxon>Saccharomycetales</taxon>
        <taxon>Saccharomycetaceae</taxon>
        <taxon>Saccharomyces</taxon>
    </lineage>
</organism>
<keyword id="KW-0010">Activator</keyword>
<keyword id="KW-0963">Cytoplasm</keyword>
<keyword id="KW-0238">DNA-binding</keyword>
<keyword id="KW-0479">Metal-binding</keyword>
<keyword id="KW-0539">Nucleus</keyword>
<keyword id="KW-0597">Phosphoprotein</keyword>
<keyword id="KW-1185">Reference proteome</keyword>
<keyword id="KW-0677">Repeat</keyword>
<keyword id="KW-0804">Transcription</keyword>
<keyword id="KW-0805">Transcription regulation</keyword>
<keyword id="KW-0862">Zinc</keyword>
<keyword id="KW-0863">Zinc-finger</keyword>
<accession>P33748</accession>
<accession>D6VZL2</accession>
<proteinExistence type="evidence at protein level"/>
<evidence type="ECO:0000255" key="1">
    <source>
        <dbReference type="PROSITE-ProRule" id="PRU00042"/>
    </source>
</evidence>
<evidence type="ECO:0000256" key="2">
    <source>
        <dbReference type="SAM" id="MobiDB-lite"/>
    </source>
</evidence>
<evidence type="ECO:0000269" key="3">
    <source>
    </source>
</evidence>
<evidence type="ECO:0000269" key="4">
    <source>
    </source>
</evidence>
<evidence type="ECO:0000269" key="5">
    <source>
    </source>
</evidence>
<evidence type="ECO:0000305" key="6">
    <source>
    </source>
</evidence>
<evidence type="ECO:0007744" key="7">
    <source>
    </source>
</evidence>
<evidence type="ECO:0007744" key="8">
    <source>
    </source>
</evidence>
<evidence type="ECO:0007744" key="9">
    <source>
    </source>
</evidence>
<sequence>MTVDHDFNSEDILFPIESMSSIQYVENNNPNNINNDVIPYSLDIKNTVLDSADLNDIQNQETSLNLGLPPLSFDSPLPVTETIPSTTDNSLHLKADSNKNRDARTIENDSEIKSTNNASGSGANQYTTLTSPYPMNDILYNMNNPLQSPSPSSVPQNPTINPPINTASNETNLSPQTSNGNETLISPRAQQHTSIKDNRLSLPNGANSNLFIDTNPNNLNEKLRNQLNSDTNSYSNSISNSNSNSTGNLNSSYFNSLNIDSMLDDYVSSDLLLNDDDDDTNLSRRRFSDVITNQFPSMTNSRNSISHSLDLWNHPKINPSNRNTNLNITTNSTSSSNASPNTTTMNANADSNIAGNPKNNDATIDNELTQILNEYNMNFNDNLGTSTSGKNKSACPSSFDANAMTKINPSQQLQQQLNRVQHKQLTSSHNNSSTNMKSFNSDLYSRRQRASLPIIDDSLSYDLVNKQDEDPKNDMLPNSNLSSSQQFIKPSMILSDNASVIAKVATTGLSNDMPFLTEEGEQNANSTPNFDLSITQMNMAPLSPASSSSTSLATNHFYHHFPQQGHHTMNSKIGSSLRRRKSAVPLMGTVPLTNQQNNISSSSVNSTGNGAGVTKERRPSYRRKSMTPSRRSSVVIESTKELEEKPFHCHICPKSFKRSEHLKRHVRSVHSNERPFACHICDKKFSRSDNLSQHIKTHKKHGDI</sequence>
<gene>
    <name type="primary">MSN2</name>
    <name type="ordered locus">YMR037C</name>
    <name type="ORF">YM9532.02C</name>
</gene>
<name>MSN2_YEAST</name>
<protein>
    <recommendedName>
        <fullName>Zinc finger protein MSN2</fullName>
    </recommendedName>
    <alternativeName>
        <fullName>Multicopy suppressor of SNF1 protein 2</fullName>
    </alternativeName>
</protein>
<feature type="chain" id="PRO_0000046810" description="Zinc finger protein MSN2">
    <location>
        <begin position="1"/>
        <end position="704"/>
    </location>
</feature>
<feature type="zinc finger region" description="C2H2-type 1" evidence="1">
    <location>
        <begin position="647"/>
        <end position="665"/>
    </location>
</feature>
<feature type="zinc finger region" description="C2H2-type 2" evidence="1">
    <location>
        <begin position="676"/>
        <end position="698"/>
    </location>
</feature>
<feature type="region of interest" description="Disordered" evidence="2">
    <location>
        <begin position="84"/>
        <end position="246"/>
    </location>
</feature>
<feature type="region of interest" description="Disordered" evidence="2">
    <location>
        <begin position="418"/>
        <end position="437"/>
    </location>
</feature>
<feature type="region of interest" description="Disordered" evidence="2">
    <location>
        <begin position="592"/>
        <end position="634"/>
    </location>
</feature>
<feature type="short sequence motif" description="9aaTAD" evidence="5">
    <location>
        <begin position="261"/>
        <end position="269"/>
    </location>
</feature>
<feature type="compositionally biased region" description="Basic and acidic residues" evidence="2">
    <location>
        <begin position="91"/>
        <end position="112"/>
    </location>
</feature>
<feature type="compositionally biased region" description="Polar residues" evidence="2">
    <location>
        <begin position="113"/>
        <end position="133"/>
    </location>
</feature>
<feature type="compositionally biased region" description="Low complexity" evidence="2">
    <location>
        <begin position="141"/>
        <end position="166"/>
    </location>
</feature>
<feature type="compositionally biased region" description="Polar residues" evidence="2">
    <location>
        <begin position="167"/>
        <end position="193"/>
    </location>
</feature>
<feature type="compositionally biased region" description="Polar residues" evidence="2">
    <location>
        <begin position="204"/>
        <end position="220"/>
    </location>
</feature>
<feature type="compositionally biased region" description="Low complexity" evidence="2">
    <location>
        <begin position="228"/>
        <end position="246"/>
    </location>
</feature>
<feature type="compositionally biased region" description="Polar residues" evidence="2">
    <location>
        <begin position="426"/>
        <end position="437"/>
    </location>
</feature>
<feature type="compositionally biased region" description="Low complexity" evidence="2">
    <location>
        <begin position="593"/>
        <end position="608"/>
    </location>
</feature>
<feature type="modified residue" description="Phosphoserine" evidence="8 9">
    <location>
        <position position="288"/>
    </location>
</feature>
<feature type="modified residue" description="Phosphoserine" evidence="7 9">
    <location>
        <position position="304"/>
    </location>
</feature>
<feature type="modified residue" description="Phosphoserine" evidence="8 9">
    <location>
        <position position="451"/>
    </location>
</feature>
<feature type="modified residue" description="Phosphoserine" evidence="9">
    <location>
        <position position="582"/>
    </location>
</feature>
<feature type="modified residue" description="Phosphoserine" evidence="7 9">
    <location>
        <position position="633"/>
    </location>
</feature>
<dbReference type="EMBL" id="L08838">
    <property type="protein sequence ID" value="AAA34806.1"/>
    <property type="molecule type" value="Genomic_DNA"/>
</dbReference>
<dbReference type="EMBL" id="Z48502">
    <property type="protein sequence ID" value="CAA88403.1"/>
    <property type="molecule type" value="Genomic_DNA"/>
</dbReference>
<dbReference type="EMBL" id="BK006946">
    <property type="protein sequence ID" value="DAA09936.1"/>
    <property type="molecule type" value="Genomic_DNA"/>
</dbReference>
<dbReference type="PIR" id="S39004">
    <property type="entry name" value="S39004"/>
</dbReference>
<dbReference type="RefSeq" id="NP_013751.1">
    <property type="nucleotide sequence ID" value="NM_001182534.1"/>
</dbReference>
<dbReference type="SMR" id="P33748"/>
<dbReference type="BioGRID" id="35209">
    <property type="interactions" value="196"/>
</dbReference>
<dbReference type="DIP" id="DIP-8185N"/>
<dbReference type="FunCoup" id="P33748">
    <property type="interactions" value="3282"/>
</dbReference>
<dbReference type="IntAct" id="P33748">
    <property type="interactions" value="72"/>
</dbReference>
<dbReference type="MINT" id="P33748"/>
<dbReference type="STRING" id="4932.YMR037C"/>
<dbReference type="iPTMnet" id="P33748"/>
<dbReference type="PaxDb" id="4932-YMR037C"/>
<dbReference type="PeptideAtlas" id="P33748"/>
<dbReference type="EnsemblFungi" id="YMR037C_mRNA">
    <property type="protein sequence ID" value="YMR037C"/>
    <property type="gene ID" value="YMR037C"/>
</dbReference>
<dbReference type="GeneID" id="855053"/>
<dbReference type="KEGG" id="sce:YMR037C"/>
<dbReference type="AGR" id="SGD:S000004640"/>
<dbReference type="SGD" id="S000004640">
    <property type="gene designation" value="MSN2"/>
</dbReference>
<dbReference type="VEuPathDB" id="FungiDB:YMR037C"/>
<dbReference type="eggNOG" id="KOG1721">
    <property type="taxonomic scope" value="Eukaryota"/>
</dbReference>
<dbReference type="GeneTree" id="ENSGT00940000174779"/>
<dbReference type="HOGENOM" id="CLU_024342_0_0_1"/>
<dbReference type="InParanoid" id="P33748"/>
<dbReference type="OMA" id="AIDINEM"/>
<dbReference type="OrthoDB" id="654211at2759"/>
<dbReference type="BioCyc" id="YEAST:G3O-32742-MONOMER"/>
<dbReference type="BioGRID-ORCS" id="855053">
    <property type="hits" value="0 hits in 13 CRISPR screens"/>
</dbReference>
<dbReference type="PRO" id="PR:P33748"/>
<dbReference type="Proteomes" id="UP000002311">
    <property type="component" value="Chromosome XIII"/>
</dbReference>
<dbReference type="RNAct" id="P33748">
    <property type="molecule type" value="protein"/>
</dbReference>
<dbReference type="GO" id="GO:0005737">
    <property type="term" value="C:cytoplasm"/>
    <property type="evidence" value="ECO:0007005"/>
    <property type="project" value="SGD"/>
</dbReference>
<dbReference type="GO" id="GO:0005829">
    <property type="term" value="C:cytosol"/>
    <property type="evidence" value="ECO:0000314"/>
    <property type="project" value="SGD"/>
</dbReference>
<dbReference type="GO" id="GO:0005634">
    <property type="term" value="C:nucleus"/>
    <property type="evidence" value="ECO:0000314"/>
    <property type="project" value="SGD"/>
</dbReference>
<dbReference type="GO" id="GO:0000987">
    <property type="term" value="F:cis-regulatory region sequence-specific DNA binding"/>
    <property type="evidence" value="ECO:0000314"/>
    <property type="project" value="SGD"/>
</dbReference>
<dbReference type="GO" id="GO:0000981">
    <property type="term" value="F:DNA-binding transcription factor activity, RNA polymerase II-specific"/>
    <property type="evidence" value="ECO:0000314"/>
    <property type="project" value="SGD"/>
</dbReference>
<dbReference type="GO" id="GO:0008270">
    <property type="term" value="F:zinc ion binding"/>
    <property type="evidence" value="ECO:0007669"/>
    <property type="project" value="UniProtKB-KW"/>
</dbReference>
<dbReference type="GO" id="GO:0071476">
    <property type="term" value="P:cellular hypotonic response"/>
    <property type="evidence" value="ECO:0000316"/>
    <property type="project" value="SGD"/>
</dbReference>
<dbReference type="GO" id="GO:0071468">
    <property type="term" value="P:cellular response to acidic pH"/>
    <property type="evidence" value="ECO:0000315"/>
    <property type="project" value="SGD"/>
</dbReference>
<dbReference type="GO" id="GO:0071469">
    <property type="term" value="P:cellular response to alkaline pH"/>
    <property type="evidence" value="ECO:0000316"/>
    <property type="project" value="SGD"/>
</dbReference>
<dbReference type="GO" id="GO:0034198">
    <property type="term" value="P:cellular response to amino acid starvation"/>
    <property type="evidence" value="ECO:0000316"/>
    <property type="project" value="SGD"/>
</dbReference>
<dbReference type="GO" id="GO:0071243">
    <property type="term" value="P:cellular response to arsenic-containing substance"/>
    <property type="evidence" value="ECO:0000316"/>
    <property type="project" value="SGD"/>
</dbReference>
<dbReference type="GO" id="GO:0061433">
    <property type="term" value="P:cellular response to caloric restriction"/>
    <property type="evidence" value="ECO:0000316"/>
    <property type="project" value="SGD"/>
</dbReference>
<dbReference type="GO" id="GO:0070417">
    <property type="term" value="P:cellular response to cold"/>
    <property type="evidence" value="ECO:0000316"/>
    <property type="project" value="SGD"/>
</dbReference>
<dbReference type="GO" id="GO:0071361">
    <property type="term" value="P:cellular response to ethanol"/>
    <property type="evidence" value="ECO:0000316"/>
    <property type="project" value="SGD"/>
</dbReference>
<dbReference type="GO" id="GO:0071497">
    <property type="term" value="P:cellular response to freezing"/>
    <property type="evidence" value="ECO:0000316"/>
    <property type="project" value="SGD"/>
</dbReference>
<dbReference type="GO" id="GO:0042149">
    <property type="term" value="P:cellular response to glucose starvation"/>
    <property type="evidence" value="ECO:0000316"/>
    <property type="project" value="SGD"/>
</dbReference>
<dbReference type="GO" id="GO:0034605">
    <property type="term" value="P:cellular response to heat"/>
    <property type="evidence" value="ECO:0000315"/>
    <property type="project" value="SGD"/>
</dbReference>
<dbReference type="GO" id="GO:0070301">
    <property type="term" value="P:cellular response to hydrogen peroxide"/>
    <property type="evidence" value="ECO:0000315"/>
    <property type="project" value="SGD"/>
</dbReference>
<dbReference type="GO" id="GO:0071464">
    <property type="term" value="P:cellular response to hydrostatic pressure"/>
    <property type="evidence" value="ECO:0000316"/>
    <property type="project" value="SGD"/>
</dbReference>
<dbReference type="GO" id="GO:0006995">
    <property type="term" value="P:cellular response to nitrogen starvation"/>
    <property type="evidence" value="ECO:0000316"/>
    <property type="project" value="SGD"/>
</dbReference>
<dbReference type="GO" id="GO:0071500">
    <property type="term" value="P:cellular response to nitrosative stress"/>
    <property type="evidence" value="ECO:0000316"/>
    <property type="project" value="SGD"/>
</dbReference>
<dbReference type="GO" id="GO:1902075">
    <property type="term" value="P:cellular response to salt"/>
    <property type="evidence" value="ECO:0000316"/>
    <property type="project" value="SGD"/>
</dbReference>
<dbReference type="GO" id="GO:0034224">
    <property type="term" value="P:cellular response to zinc ion starvation"/>
    <property type="evidence" value="ECO:0000316"/>
    <property type="project" value="SGD"/>
</dbReference>
<dbReference type="GO" id="GO:0006338">
    <property type="term" value="P:chromatin remodeling"/>
    <property type="evidence" value="ECO:0000316"/>
    <property type="project" value="SGD"/>
</dbReference>
<dbReference type="GO" id="GO:0045944">
    <property type="term" value="P:positive regulation of transcription by RNA polymerase II"/>
    <property type="evidence" value="ECO:0000315"/>
    <property type="project" value="SGD"/>
</dbReference>
<dbReference type="GO" id="GO:0006357">
    <property type="term" value="P:regulation of transcription by RNA polymerase II"/>
    <property type="evidence" value="ECO:0000316"/>
    <property type="project" value="SGD"/>
</dbReference>
<dbReference type="GO" id="GO:0042594">
    <property type="term" value="P:response to starvation"/>
    <property type="evidence" value="ECO:0000318"/>
    <property type="project" value="GO_Central"/>
</dbReference>
<dbReference type="FunFam" id="3.30.160.60:FF:001845">
    <property type="entry name" value="Transcription factor Msn2p"/>
    <property type="match status" value="1"/>
</dbReference>
<dbReference type="FunFam" id="3.30.160.60:FF:000624">
    <property type="entry name" value="zinc finger protein 697"/>
    <property type="match status" value="1"/>
</dbReference>
<dbReference type="Gene3D" id="3.30.160.60">
    <property type="entry name" value="Classic Zinc Finger"/>
    <property type="match status" value="2"/>
</dbReference>
<dbReference type="InterPro" id="IPR050331">
    <property type="entry name" value="Zinc_finger"/>
</dbReference>
<dbReference type="InterPro" id="IPR036236">
    <property type="entry name" value="Znf_C2H2_sf"/>
</dbReference>
<dbReference type="InterPro" id="IPR013087">
    <property type="entry name" value="Znf_C2H2_type"/>
</dbReference>
<dbReference type="PANTHER" id="PTHR16515:SF66">
    <property type="entry name" value="C2H2-TYPE DOMAIN-CONTAINING PROTEIN"/>
    <property type="match status" value="1"/>
</dbReference>
<dbReference type="PANTHER" id="PTHR16515">
    <property type="entry name" value="PR DOMAIN ZINC FINGER PROTEIN"/>
    <property type="match status" value="1"/>
</dbReference>
<dbReference type="Pfam" id="PF00096">
    <property type="entry name" value="zf-C2H2"/>
    <property type="match status" value="2"/>
</dbReference>
<dbReference type="SMART" id="SM00355">
    <property type="entry name" value="ZnF_C2H2"/>
    <property type="match status" value="2"/>
</dbReference>
<dbReference type="SUPFAM" id="SSF57667">
    <property type="entry name" value="beta-beta-alpha zinc fingers"/>
    <property type="match status" value="1"/>
</dbReference>
<dbReference type="PROSITE" id="PS00028">
    <property type="entry name" value="ZINC_FINGER_C2H2_1"/>
    <property type="match status" value="2"/>
</dbReference>
<dbReference type="PROSITE" id="PS50157">
    <property type="entry name" value="ZINC_FINGER_C2H2_2"/>
    <property type="match status" value="2"/>
</dbReference>
<comment type="function">
    <text>Positive transcriptional factor that acts as a component of the stress responsive system. Recognizes and binds to the stress response element (STRE) which is involved in the response to various forms of stress (heat, oxidative, osmotic, etc.). Involved in the regulation of the CTT1, DDR2, HSP12 genes. May be regulated via WHI2-PSR1 complex phosphatase activity.</text>
</comment>
<comment type="subunit">
    <text evidence="3">Interacts with WHI2.</text>
</comment>
<comment type="interaction">
    <interactant intactId="EBI-11407">
        <id>P33748</id>
    </interactant>
    <interactant intactId="EBI-3672">
        <id>P34730</id>
        <label>BMH2</label>
    </interactant>
    <organismsDiffer>false</organismsDiffer>
    <experiments>2</experiments>
</comment>
<comment type="subcellular location">
    <subcellularLocation>
        <location>Cytoplasm</location>
    </subcellularLocation>
    <subcellularLocation>
        <location>Nucleus</location>
    </subcellularLocation>
</comment>
<comment type="domain">
    <text evidence="6">The 9aaTAD motif (residues 261 to 269) is a transactivation domain present in a large number of yeast and animal transcription factors.</text>
</comment>
<comment type="miscellaneous">
    <text evidence="4">Present with 125 molecules/cell in log phase SD medium.</text>
</comment>